<keyword id="KW-0066">ATP synthesis</keyword>
<keyword id="KW-0067">ATP-binding</keyword>
<keyword id="KW-0997">Cell inner membrane</keyword>
<keyword id="KW-1003">Cell membrane</keyword>
<keyword id="KW-0139">CF(1)</keyword>
<keyword id="KW-0375">Hydrogen ion transport</keyword>
<keyword id="KW-0406">Ion transport</keyword>
<keyword id="KW-0472">Membrane</keyword>
<keyword id="KW-0547">Nucleotide-binding</keyword>
<keyword id="KW-1278">Translocase</keyword>
<keyword id="KW-0813">Transport</keyword>
<accession>A1KW13</accession>
<dbReference type="EC" id="7.1.2.2" evidence="1"/>
<dbReference type="EMBL" id="AM421808">
    <property type="protein sequence ID" value="CAM11069.1"/>
    <property type="molecule type" value="Genomic_DNA"/>
</dbReference>
<dbReference type="RefSeq" id="WP_002248152.1">
    <property type="nucleotide sequence ID" value="NC_008767.1"/>
</dbReference>
<dbReference type="SMR" id="A1KW13"/>
<dbReference type="KEGG" id="nmc:NMC1908"/>
<dbReference type="HOGENOM" id="CLU_010091_2_1_4"/>
<dbReference type="Proteomes" id="UP000002286">
    <property type="component" value="Chromosome"/>
</dbReference>
<dbReference type="GO" id="GO:0005886">
    <property type="term" value="C:plasma membrane"/>
    <property type="evidence" value="ECO:0007669"/>
    <property type="project" value="UniProtKB-SubCell"/>
</dbReference>
<dbReference type="GO" id="GO:0045259">
    <property type="term" value="C:proton-transporting ATP synthase complex"/>
    <property type="evidence" value="ECO:0007669"/>
    <property type="project" value="UniProtKB-KW"/>
</dbReference>
<dbReference type="GO" id="GO:0043531">
    <property type="term" value="F:ADP binding"/>
    <property type="evidence" value="ECO:0007669"/>
    <property type="project" value="TreeGrafter"/>
</dbReference>
<dbReference type="GO" id="GO:0005524">
    <property type="term" value="F:ATP binding"/>
    <property type="evidence" value="ECO:0007669"/>
    <property type="project" value="UniProtKB-UniRule"/>
</dbReference>
<dbReference type="GO" id="GO:0046933">
    <property type="term" value="F:proton-transporting ATP synthase activity, rotational mechanism"/>
    <property type="evidence" value="ECO:0007669"/>
    <property type="project" value="UniProtKB-UniRule"/>
</dbReference>
<dbReference type="CDD" id="cd18113">
    <property type="entry name" value="ATP-synt_F1_alpha_C"/>
    <property type="match status" value="1"/>
</dbReference>
<dbReference type="CDD" id="cd18116">
    <property type="entry name" value="ATP-synt_F1_alpha_N"/>
    <property type="match status" value="1"/>
</dbReference>
<dbReference type="CDD" id="cd01132">
    <property type="entry name" value="F1-ATPase_alpha_CD"/>
    <property type="match status" value="1"/>
</dbReference>
<dbReference type="FunFam" id="1.20.150.20:FF:000001">
    <property type="entry name" value="ATP synthase subunit alpha"/>
    <property type="match status" value="1"/>
</dbReference>
<dbReference type="FunFam" id="2.40.30.20:FF:000001">
    <property type="entry name" value="ATP synthase subunit alpha"/>
    <property type="match status" value="1"/>
</dbReference>
<dbReference type="FunFam" id="3.40.50.300:FF:000002">
    <property type="entry name" value="ATP synthase subunit alpha"/>
    <property type="match status" value="1"/>
</dbReference>
<dbReference type="Gene3D" id="2.40.30.20">
    <property type="match status" value="1"/>
</dbReference>
<dbReference type="Gene3D" id="1.20.150.20">
    <property type="entry name" value="ATP synthase alpha/beta chain, C-terminal domain"/>
    <property type="match status" value="1"/>
</dbReference>
<dbReference type="Gene3D" id="3.40.50.300">
    <property type="entry name" value="P-loop containing nucleotide triphosphate hydrolases"/>
    <property type="match status" value="1"/>
</dbReference>
<dbReference type="HAMAP" id="MF_01346">
    <property type="entry name" value="ATP_synth_alpha_bact"/>
    <property type="match status" value="1"/>
</dbReference>
<dbReference type="InterPro" id="IPR023366">
    <property type="entry name" value="ATP_synth_asu-like_sf"/>
</dbReference>
<dbReference type="InterPro" id="IPR000793">
    <property type="entry name" value="ATP_synth_asu_C"/>
</dbReference>
<dbReference type="InterPro" id="IPR038376">
    <property type="entry name" value="ATP_synth_asu_C_sf"/>
</dbReference>
<dbReference type="InterPro" id="IPR033732">
    <property type="entry name" value="ATP_synth_F1_a_nt-bd_dom"/>
</dbReference>
<dbReference type="InterPro" id="IPR005294">
    <property type="entry name" value="ATP_synth_F1_asu"/>
</dbReference>
<dbReference type="InterPro" id="IPR020003">
    <property type="entry name" value="ATPase_a/bsu_AS"/>
</dbReference>
<dbReference type="InterPro" id="IPR004100">
    <property type="entry name" value="ATPase_F1/V1/A1_a/bsu_N"/>
</dbReference>
<dbReference type="InterPro" id="IPR036121">
    <property type="entry name" value="ATPase_F1/V1/A1_a/bsu_N_sf"/>
</dbReference>
<dbReference type="InterPro" id="IPR000194">
    <property type="entry name" value="ATPase_F1/V1/A1_a/bsu_nucl-bd"/>
</dbReference>
<dbReference type="InterPro" id="IPR027417">
    <property type="entry name" value="P-loop_NTPase"/>
</dbReference>
<dbReference type="NCBIfam" id="TIGR00962">
    <property type="entry name" value="atpA"/>
    <property type="match status" value="1"/>
</dbReference>
<dbReference type="NCBIfam" id="NF009884">
    <property type="entry name" value="PRK13343.1"/>
    <property type="match status" value="1"/>
</dbReference>
<dbReference type="PANTHER" id="PTHR48082">
    <property type="entry name" value="ATP SYNTHASE SUBUNIT ALPHA, MITOCHONDRIAL"/>
    <property type="match status" value="1"/>
</dbReference>
<dbReference type="PANTHER" id="PTHR48082:SF2">
    <property type="entry name" value="ATP SYNTHASE SUBUNIT ALPHA, MITOCHONDRIAL"/>
    <property type="match status" value="1"/>
</dbReference>
<dbReference type="Pfam" id="PF00006">
    <property type="entry name" value="ATP-synt_ab"/>
    <property type="match status" value="1"/>
</dbReference>
<dbReference type="Pfam" id="PF00306">
    <property type="entry name" value="ATP-synt_ab_C"/>
    <property type="match status" value="1"/>
</dbReference>
<dbReference type="Pfam" id="PF02874">
    <property type="entry name" value="ATP-synt_ab_N"/>
    <property type="match status" value="1"/>
</dbReference>
<dbReference type="PIRSF" id="PIRSF039088">
    <property type="entry name" value="F_ATPase_subunit_alpha"/>
    <property type="match status" value="1"/>
</dbReference>
<dbReference type="SUPFAM" id="SSF47917">
    <property type="entry name" value="C-terminal domain of alpha and beta subunits of F1 ATP synthase"/>
    <property type="match status" value="1"/>
</dbReference>
<dbReference type="SUPFAM" id="SSF50615">
    <property type="entry name" value="N-terminal domain of alpha and beta subunits of F1 ATP synthase"/>
    <property type="match status" value="1"/>
</dbReference>
<dbReference type="SUPFAM" id="SSF52540">
    <property type="entry name" value="P-loop containing nucleoside triphosphate hydrolases"/>
    <property type="match status" value="1"/>
</dbReference>
<dbReference type="PROSITE" id="PS00152">
    <property type="entry name" value="ATPASE_ALPHA_BETA"/>
    <property type="match status" value="1"/>
</dbReference>
<comment type="function">
    <text evidence="1">Produces ATP from ADP in the presence of a proton gradient across the membrane. The alpha chain is a regulatory subunit.</text>
</comment>
<comment type="catalytic activity">
    <reaction evidence="1">
        <text>ATP + H2O + 4 H(+)(in) = ADP + phosphate + 5 H(+)(out)</text>
        <dbReference type="Rhea" id="RHEA:57720"/>
        <dbReference type="ChEBI" id="CHEBI:15377"/>
        <dbReference type="ChEBI" id="CHEBI:15378"/>
        <dbReference type="ChEBI" id="CHEBI:30616"/>
        <dbReference type="ChEBI" id="CHEBI:43474"/>
        <dbReference type="ChEBI" id="CHEBI:456216"/>
        <dbReference type="EC" id="7.1.2.2"/>
    </reaction>
</comment>
<comment type="subunit">
    <text evidence="1">F-type ATPases have 2 components, CF(1) - the catalytic core - and CF(0) - the membrane proton channel. CF(1) has five subunits: alpha(3), beta(3), gamma(1), delta(1), epsilon(1). CF(0) has three main subunits: a(1), b(2) and c(9-12). The alpha and beta chains form an alternating ring which encloses part of the gamma chain. CF(1) is attached to CF(0) by a central stalk formed by the gamma and epsilon chains, while a peripheral stalk is formed by the delta and b chains.</text>
</comment>
<comment type="subcellular location">
    <subcellularLocation>
        <location evidence="1">Cell inner membrane</location>
        <topology evidence="1">Peripheral membrane protein</topology>
    </subcellularLocation>
</comment>
<comment type="similarity">
    <text evidence="1">Belongs to the ATPase alpha/beta chains family.</text>
</comment>
<evidence type="ECO:0000255" key="1">
    <source>
        <dbReference type="HAMAP-Rule" id="MF_01346"/>
    </source>
</evidence>
<feature type="chain" id="PRO_0000302676" description="ATP synthase subunit alpha">
    <location>
        <begin position="1"/>
        <end position="515"/>
    </location>
</feature>
<feature type="binding site" evidence="1">
    <location>
        <begin position="169"/>
        <end position="176"/>
    </location>
    <ligand>
        <name>ATP</name>
        <dbReference type="ChEBI" id="CHEBI:30616"/>
    </ligand>
</feature>
<feature type="site" description="Required for activity" evidence="1">
    <location>
        <position position="373"/>
    </location>
</feature>
<reference key="1">
    <citation type="journal article" date="2007" name="PLoS Genet.">
        <title>Meningococcal genetic variation mechanisms viewed through comparative analysis of serogroup C strain FAM18.</title>
        <authorList>
            <person name="Bentley S.D."/>
            <person name="Vernikos G.S."/>
            <person name="Snyder L.A.S."/>
            <person name="Churcher C."/>
            <person name="Arrowsmith C."/>
            <person name="Chillingworth T."/>
            <person name="Cronin A."/>
            <person name="Davis P.H."/>
            <person name="Holroyd N.E."/>
            <person name="Jagels K."/>
            <person name="Maddison M."/>
            <person name="Moule S."/>
            <person name="Rabbinowitsch E."/>
            <person name="Sharp S."/>
            <person name="Unwin L."/>
            <person name="Whitehead S."/>
            <person name="Quail M.A."/>
            <person name="Achtman M."/>
            <person name="Barrell B.G."/>
            <person name="Saunders N.J."/>
            <person name="Parkhill J."/>
        </authorList>
    </citation>
    <scope>NUCLEOTIDE SEQUENCE [LARGE SCALE GENOMIC DNA]</scope>
    <source>
        <strain>ATCC 700532 / DSM 15464 / FAM18</strain>
    </source>
</reference>
<organism>
    <name type="scientific">Neisseria meningitidis serogroup C / serotype 2a (strain ATCC 700532 / DSM 15464 / FAM18)</name>
    <dbReference type="NCBI Taxonomy" id="272831"/>
    <lineage>
        <taxon>Bacteria</taxon>
        <taxon>Pseudomonadati</taxon>
        <taxon>Pseudomonadota</taxon>
        <taxon>Betaproteobacteria</taxon>
        <taxon>Neisseriales</taxon>
        <taxon>Neisseriaceae</taxon>
        <taxon>Neisseria</taxon>
    </lineage>
</organism>
<proteinExistence type="inferred from homology"/>
<sequence>MQLNPAEISDLIKAKIENLSVNAEVRTRGTVVSVTDGIVRIHGLSDAMQGEMLEFPGNTFGLAMNLERDSVGAVVLGEYEHIKEGDTVTCTGRILEVPVGRELVGRVVDALGRPIDGKGPINTTLTAPIEKIAPGVIARKSVDQPMQTGLKAIDSMVPVGRGQRELIIGDRQTGKTAVALDAIVNQKGTGVICIYVAIGQKASSIANVVRKLEEHGAMEHTIVVAATASEAAALQYIAPYSGCTMGEFFRDRGEDALIVYDDLSKQAVAYRQISLLLRRPPGREAYPGDVFYLHSRLLERAARVNEHEVEKLTNGEVKGKTGSLTALPIIETQAGDVSAFVPTNVISITDGQIFLETDLFNAGIRPAINAGISVSRVGGAAQTKVIKKLGGGIRLALAQYRELAAFSQFASDLDEATRKQLEHGEVVTELMKQKQFSTLNTAEMALTLWAINNGSYSDVPVAKALAFESEFLSFVRTQHPEVLEAVNASGAMSDESEKTLEAAMKSFKSSYAYQA</sequence>
<gene>
    <name evidence="1" type="primary">atpA</name>
    <name type="ordered locus">NMC1908</name>
</gene>
<protein>
    <recommendedName>
        <fullName evidence="1">ATP synthase subunit alpha</fullName>
        <ecNumber evidence="1">7.1.2.2</ecNumber>
    </recommendedName>
    <alternativeName>
        <fullName evidence="1">ATP synthase F1 sector subunit alpha</fullName>
    </alternativeName>
    <alternativeName>
        <fullName evidence="1">F-ATPase subunit alpha</fullName>
    </alternativeName>
</protein>
<name>ATPA_NEIMF</name>